<protein>
    <recommendedName>
        <fullName>Protein SRL2</fullName>
    </recommendedName>
    <alternativeName>
        <fullName>Suppressor of RAD53 null lethality protein 2</fullName>
    </alternativeName>
</protein>
<feature type="chain" id="PRO_0000270577" description="Protein SRL2">
    <location>
        <begin position="1"/>
        <end position="392"/>
    </location>
</feature>
<feature type="region of interest" description="Disordered" evidence="1">
    <location>
        <begin position="18"/>
        <end position="52"/>
    </location>
</feature>
<feature type="region of interest" description="Disordered" evidence="1">
    <location>
        <begin position="284"/>
        <end position="303"/>
    </location>
</feature>
<feature type="compositionally biased region" description="Basic and acidic residues" evidence="1">
    <location>
        <begin position="21"/>
        <end position="31"/>
    </location>
</feature>
<feature type="compositionally biased region" description="Basic residues" evidence="1">
    <location>
        <begin position="41"/>
        <end position="50"/>
    </location>
</feature>
<feature type="compositionally biased region" description="Polar residues" evidence="1">
    <location>
        <begin position="287"/>
        <end position="296"/>
    </location>
</feature>
<feature type="modified residue" description="Phosphoserine" evidence="4">
    <location>
        <position position="11"/>
    </location>
</feature>
<feature type="modified residue" description="Phosphoserine" evidence="4 5">
    <location>
        <position position="139"/>
    </location>
</feature>
<evidence type="ECO:0000256" key="1">
    <source>
        <dbReference type="SAM" id="MobiDB-lite"/>
    </source>
</evidence>
<evidence type="ECO:0000269" key="2">
    <source>
    </source>
</evidence>
<evidence type="ECO:0000269" key="3">
    <source>
    </source>
</evidence>
<evidence type="ECO:0007744" key="4">
    <source>
    </source>
</evidence>
<evidence type="ECO:0007744" key="5">
    <source>
    </source>
</evidence>
<organism>
    <name type="scientific">Saccharomyces cerevisiae (strain ATCC 204508 / S288c)</name>
    <name type="common">Baker's yeast</name>
    <dbReference type="NCBI Taxonomy" id="559292"/>
    <lineage>
        <taxon>Eukaryota</taxon>
        <taxon>Fungi</taxon>
        <taxon>Dikarya</taxon>
        <taxon>Ascomycota</taxon>
        <taxon>Saccharomycotina</taxon>
        <taxon>Saccharomycetes</taxon>
        <taxon>Saccharomycetales</taxon>
        <taxon>Saccharomycetaceae</taxon>
        <taxon>Saccharomyces</taxon>
    </lineage>
</organism>
<reference key="1">
    <citation type="journal article" date="1997" name="Nature">
        <title>The nucleotide sequence of Saccharomyces cerevisiae chromosome XII.</title>
        <authorList>
            <person name="Johnston M."/>
            <person name="Hillier L.W."/>
            <person name="Riles L."/>
            <person name="Albermann K."/>
            <person name="Andre B."/>
            <person name="Ansorge W."/>
            <person name="Benes V."/>
            <person name="Brueckner M."/>
            <person name="Delius H."/>
            <person name="Dubois E."/>
            <person name="Duesterhoeft A."/>
            <person name="Entian K.-D."/>
            <person name="Floeth M."/>
            <person name="Goffeau A."/>
            <person name="Hebling U."/>
            <person name="Heumann K."/>
            <person name="Heuss-Neitzel D."/>
            <person name="Hilbert H."/>
            <person name="Hilger F."/>
            <person name="Kleine K."/>
            <person name="Koetter P."/>
            <person name="Louis E.J."/>
            <person name="Messenguy F."/>
            <person name="Mewes H.-W."/>
            <person name="Miosga T."/>
            <person name="Moestl D."/>
            <person name="Mueller-Auer S."/>
            <person name="Nentwich U."/>
            <person name="Obermaier B."/>
            <person name="Piravandi E."/>
            <person name="Pohl T.M."/>
            <person name="Portetelle D."/>
            <person name="Purnelle B."/>
            <person name="Rechmann S."/>
            <person name="Rieger M."/>
            <person name="Rinke M."/>
            <person name="Rose M."/>
            <person name="Scharfe M."/>
            <person name="Scherens B."/>
            <person name="Scholler P."/>
            <person name="Schwager C."/>
            <person name="Schwarz S."/>
            <person name="Underwood A.P."/>
            <person name="Urrestarazu L.A."/>
            <person name="Vandenbol M."/>
            <person name="Verhasselt P."/>
            <person name="Vierendeels F."/>
            <person name="Voet M."/>
            <person name="Volckaert G."/>
            <person name="Voss H."/>
            <person name="Wambutt R."/>
            <person name="Wedler E."/>
            <person name="Wedler H."/>
            <person name="Zimmermann F.K."/>
            <person name="Zollner A."/>
            <person name="Hani J."/>
            <person name="Hoheisel J.D."/>
        </authorList>
    </citation>
    <scope>NUCLEOTIDE SEQUENCE [LARGE SCALE GENOMIC DNA]</scope>
    <source>
        <strain>ATCC 204508 / S288c</strain>
    </source>
</reference>
<reference key="2">
    <citation type="journal article" date="2014" name="G3 (Bethesda)">
        <title>The reference genome sequence of Saccharomyces cerevisiae: Then and now.</title>
        <authorList>
            <person name="Engel S.R."/>
            <person name="Dietrich F.S."/>
            <person name="Fisk D.G."/>
            <person name="Binkley G."/>
            <person name="Balakrishnan R."/>
            <person name="Costanzo M.C."/>
            <person name="Dwight S.S."/>
            <person name="Hitz B.C."/>
            <person name="Karra K."/>
            <person name="Nash R.S."/>
            <person name="Weng S."/>
            <person name="Wong E.D."/>
            <person name="Lloyd P."/>
            <person name="Skrzypek M.S."/>
            <person name="Miyasato S.R."/>
            <person name="Simison M."/>
            <person name="Cherry J.M."/>
        </authorList>
    </citation>
    <scope>GENOME REANNOTATION</scope>
    <source>
        <strain>ATCC 204508 / S288c</strain>
    </source>
</reference>
<reference key="3">
    <citation type="journal article" date="2003" name="Nature">
        <title>Global analysis of protein localization in budding yeast.</title>
        <authorList>
            <person name="Huh W.-K."/>
            <person name="Falvo J.V."/>
            <person name="Gerke L.C."/>
            <person name="Carroll A.S."/>
            <person name="Howson R.W."/>
            <person name="Weissman J.S."/>
            <person name="O'Shea E.K."/>
        </authorList>
    </citation>
    <scope>SUBCELLULAR LOCATION [LARGE SCALE ANALYSIS]</scope>
</reference>
<reference key="4">
    <citation type="journal article" date="2003" name="Nature">
        <title>Global analysis of protein expression in yeast.</title>
        <authorList>
            <person name="Ghaemmaghami S."/>
            <person name="Huh W.-K."/>
            <person name="Bower K."/>
            <person name="Howson R.W."/>
            <person name="Belle A."/>
            <person name="Dephoure N."/>
            <person name="O'Shea E.K."/>
            <person name="Weissman J.S."/>
        </authorList>
    </citation>
    <scope>LEVEL OF PROTEIN EXPRESSION [LARGE SCALE ANALYSIS]</scope>
</reference>
<reference key="5">
    <citation type="journal article" date="2008" name="Mol. Cell. Proteomics">
        <title>A multidimensional chromatography technology for in-depth phosphoproteome analysis.</title>
        <authorList>
            <person name="Albuquerque C.P."/>
            <person name="Smolka M.B."/>
            <person name="Payne S.H."/>
            <person name="Bafna V."/>
            <person name="Eng J."/>
            <person name="Zhou H."/>
        </authorList>
    </citation>
    <scope>PHOSPHORYLATION [LARGE SCALE ANALYSIS] AT SER-11 AND SER-139</scope>
    <scope>IDENTIFICATION BY MASS SPECTROMETRY [LARGE SCALE ANALYSIS]</scope>
</reference>
<reference key="6">
    <citation type="journal article" date="2009" name="Science">
        <title>Global analysis of Cdk1 substrate phosphorylation sites provides insights into evolution.</title>
        <authorList>
            <person name="Holt L.J."/>
            <person name="Tuch B.B."/>
            <person name="Villen J."/>
            <person name="Johnson A.D."/>
            <person name="Gygi S.P."/>
            <person name="Morgan D.O."/>
        </authorList>
    </citation>
    <scope>PHOSPHORYLATION [LARGE SCALE ANALYSIS] AT SER-139</scope>
    <scope>IDENTIFICATION BY MASS SPECTROMETRY [LARGE SCALE ANALYSIS]</scope>
</reference>
<gene>
    <name type="primary">SRL2</name>
    <name type="ordered locus">YLR082C</name>
</gene>
<proteinExistence type="evidence at protein level"/>
<dbReference type="EMBL" id="Z73254">
    <property type="protein sequence ID" value="CAA97641.1"/>
    <property type="molecule type" value="Genomic_DNA"/>
</dbReference>
<dbReference type="EMBL" id="U53880">
    <property type="protein sequence ID" value="AAB67586.1"/>
    <property type="molecule type" value="Genomic_DNA"/>
</dbReference>
<dbReference type="EMBL" id="BK006945">
    <property type="protein sequence ID" value="DAA09398.1"/>
    <property type="molecule type" value="Genomic_DNA"/>
</dbReference>
<dbReference type="PIR" id="S64914">
    <property type="entry name" value="S64914"/>
</dbReference>
<dbReference type="RefSeq" id="NP_013183.1">
    <property type="nucleotide sequence ID" value="NM_001181969.1"/>
</dbReference>
<dbReference type="SMR" id="Q12020"/>
<dbReference type="BioGRID" id="31355">
    <property type="interactions" value="111"/>
</dbReference>
<dbReference type="DIP" id="DIP-1442N"/>
<dbReference type="FunCoup" id="Q12020">
    <property type="interactions" value="119"/>
</dbReference>
<dbReference type="IntAct" id="Q12020">
    <property type="interactions" value="9"/>
</dbReference>
<dbReference type="MINT" id="Q12020"/>
<dbReference type="STRING" id="4932.YLR082C"/>
<dbReference type="iPTMnet" id="Q12020"/>
<dbReference type="PaxDb" id="4932-YLR082C"/>
<dbReference type="PeptideAtlas" id="Q12020"/>
<dbReference type="EnsemblFungi" id="YLR082C_mRNA">
    <property type="protein sequence ID" value="YLR082C"/>
    <property type="gene ID" value="YLR082C"/>
</dbReference>
<dbReference type="GeneID" id="850771"/>
<dbReference type="KEGG" id="sce:YLR082C"/>
<dbReference type="AGR" id="SGD:S000004072"/>
<dbReference type="SGD" id="S000004072">
    <property type="gene designation" value="SRL2"/>
</dbReference>
<dbReference type="VEuPathDB" id="FungiDB:YLR082C"/>
<dbReference type="HOGENOM" id="CLU_071668_0_0_1"/>
<dbReference type="InParanoid" id="Q12020"/>
<dbReference type="OMA" id="RRPILCH"/>
<dbReference type="OrthoDB" id="4044877at2759"/>
<dbReference type="BioCyc" id="YEAST:G3O-32233-MONOMER"/>
<dbReference type="BioGRID-ORCS" id="850771">
    <property type="hits" value="0 hits in 10 CRISPR screens"/>
</dbReference>
<dbReference type="PRO" id="PR:Q12020"/>
<dbReference type="Proteomes" id="UP000002311">
    <property type="component" value="Chromosome XII"/>
</dbReference>
<dbReference type="RNAct" id="Q12020">
    <property type="molecule type" value="protein"/>
</dbReference>
<dbReference type="GO" id="GO:0005737">
    <property type="term" value="C:cytoplasm"/>
    <property type="evidence" value="ECO:0007005"/>
    <property type="project" value="SGD"/>
</dbReference>
<dbReference type="GO" id="GO:0005634">
    <property type="term" value="C:nucleus"/>
    <property type="evidence" value="ECO:0007005"/>
    <property type="project" value="SGD"/>
</dbReference>
<dbReference type="GO" id="GO:0006139">
    <property type="term" value="P:nucleobase-containing compound metabolic process"/>
    <property type="evidence" value="ECO:0000315"/>
    <property type="project" value="SGD"/>
</dbReference>
<comment type="interaction">
    <interactant intactId="EBI-38714">
        <id>Q12020</id>
    </interactant>
    <interactant intactId="EBI-11507">
        <id>P39014</id>
        <label>MET30</label>
    </interactant>
    <organismsDiffer>false</organismsDiffer>
    <experiments>3</experiments>
</comment>
<comment type="subcellular location">
    <subcellularLocation>
        <location evidence="2">Cytoplasm</location>
    </subcellularLocation>
    <subcellularLocation>
        <location evidence="2">Nucleus</location>
    </subcellularLocation>
</comment>
<comment type="miscellaneous">
    <text evidence="3">Present with 538 molecules/cell in log phase SD medium.</text>
</comment>
<accession>Q12020</accession>
<accession>D6VY82</accession>
<name>SRL2_YEAST</name>
<keyword id="KW-0963">Cytoplasm</keyword>
<keyword id="KW-0539">Nucleus</keyword>
<keyword id="KW-0597">Phosphoprotein</keyword>
<keyword id="KW-1185">Reference proteome</keyword>
<sequence>MSNFKNFTLNSFEDYYGKPSETPKMEEEKLEVTNVNASSSKKVHKSKKSTSKYDQKNVFRNSMTGIAQILPTKPVKIIEQNIDFANPKSFDLLQSTHTICFNKRINTTNTKLNVETHTSSDIDNDILHVGAPTDLGGNSNDEAETRQLRKFRWSNNKEKSLCEKLTVIYWALLLHTTKRASKRRPILCHQMIAEFFNRVYKEKSRVPITSRYIRDNLVAWVTQGKELHEKGWVGDAKTGDLQEQFNIATVKLYESAEDGRLSIGKDKPFREENTGSDSLVRAEEDSTAVTNENGHISSEKNLKKDRRESIRNQILTLDLNDEDFFQNVMKVLSAIDEPELRQYVIVISELVSMEMDDGKTVREKLRDVELNINRLQVDIKEIKEMLVTLINK</sequence>